<protein>
    <recommendedName>
        <fullName evidence="1">Outer membrane protein assembly factor BamA</fullName>
    </recommendedName>
</protein>
<sequence length="810" mass="90553">MAMKKLLIASLLFSSATVYGAEGFVVKDIHFEGLQRVAVGAALLSMPVRTGDTVNDEDISNTIRALFATGNFEDVRVLRDGDTLLVQVKERPTIASITFSGNKSVKDDMLKQNLEASGVRVGESLDRTTIADIEKGLEDFYYSVGKYSASVKAVVTPLPRNRVDLKLVFQEGVSAEIQQINIVGNHAFTTDELISHFQLRDEVPWWNVVGDRKYQKQKLAGDLETLRSYYLDRGYARFNIDSTQVSLTPDKKGIYVTVNITEGDQYKLSGVEVSGNLAGHSAEIEQLTKIEPGELYNGTKVTKMEDDIKKLLGRYGYAYPRVQSMPEINDADKTVKLRVNVDAGNRFYVRKIRFEGNDTSKDAVLRREMRQMEGAWLGSDLVDQGKERLNRLGFFETVDTDTQRVPGSPDQVDVVYKVKERNTGSFNFGIGYGTESGVSFQAGVQQDNWLGTGYAVGINGTKNDYQTYAELSVTNPYFTVDGVSLGGRLFYNDFQADDADLSDYTNKSYGTDVTLGFPINEYNSLRAGLGYVHNSLSNMQPQVAMWRYLYSMGEHPSTSDQDNSFKTDDFTFNYGWTYNKLDRGYFPTDGSRVNLTGKVTIPGSDNEYYKVTLDTATYVPIDDDHKWVVLGRTRWGYGDGLGGKEMPFYENFYAGGSSTVRGFQSNTIGPKAVYFPHQASNYDPDYDYECATQDGAKDLCKSDDAVGGNAMAVASLEFITPTPFISDKYANSVRTSFFWDMGTVWDTNWDSSQYSGYPDYSDPSNIRMSAGIALQWMSPLGPLVFSYAQPFKKYDGDKAEQFQFNIGKTW</sequence>
<proteinExistence type="inferred from homology"/>
<keyword id="KW-0998">Cell outer membrane</keyword>
<keyword id="KW-0472">Membrane</keyword>
<keyword id="KW-1185">Reference proteome</keyword>
<keyword id="KW-0677">Repeat</keyword>
<keyword id="KW-0732">Signal</keyword>
<keyword id="KW-0812">Transmembrane</keyword>
<keyword id="KW-1134">Transmembrane beta strand</keyword>
<organism>
    <name type="scientific">Escherichia coli (strain 55989 / EAEC)</name>
    <dbReference type="NCBI Taxonomy" id="585055"/>
    <lineage>
        <taxon>Bacteria</taxon>
        <taxon>Pseudomonadati</taxon>
        <taxon>Pseudomonadota</taxon>
        <taxon>Gammaproteobacteria</taxon>
        <taxon>Enterobacterales</taxon>
        <taxon>Enterobacteriaceae</taxon>
        <taxon>Escherichia</taxon>
    </lineage>
</organism>
<name>BAMA_ECO55</name>
<reference key="1">
    <citation type="journal article" date="2009" name="PLoS Genet.">
        <title>Organised genome dynamics in the Escherichia coli species results in highly diverse adaptive paths.</title>
        <authorList>
            <person name="Touchon M."/>
            <person name="Hoede C."/>
            <person name="Tenaillon O."/>
            <person name="Barbe V."/>
            <person name="Baeriswyl S."/>
            <person name="Bidet P."/>
            <person name="Bingen E."/>
            <person name="Bonacorsi S."/>
            <person name="Bouchier C."/>
            <person name="Bouvet O."/>
            <person name="Calteau A."/>
            <person name="Chiapello H."/>
            <person name="Clermont O."/>
            <person name="Cruveiller S."/>
            <person name="Danchin A."/>
            <person name="Diard M."/>
            <person name="Dossat C."/>
            <person name="Karoui M.E."/>
            <person name="Frapy E."/>
            <person name="Garry L."/>
            <person name="Ghigo J.M."/>
            <person name="Gilles A.M."/>
            <person name="Johnson J."/>
            <person name="Le Bouguenec C."/>
            <person name="Lescat M."/>
            <person name="Mangenot S."/>
            <person name="Martinez-Jehanne V."/>
            <person name="Matic I."/>
            <person name="Nassif X."/>
            <person name="Oztas S."/>
            <person name="Petit M.A."/>
            <person name="Pichon C."/>
            <person name="Rouy Z."/>
            <person name="Ruf C.S."/>
            <person name="Schneider D."/>
            <person name="Tourret J."/>
            <person name="Vacherie B."/>
            <person name="Vallenet D."/>
            <person name="Medigue C."/>
            <person name="Rocha E.P.C."/>
            <person name="Denamur E."/>
        </authorList>
    </citation>
    <scope>NUCLEOTIDE SEQUENCE [LARGE SCALE GENOMIC DNA]</scope>
    <source>
        <strain>55989 / EAEC</strain>
    </source>
</reference>
<accession>B7LGN8</accession>
<comment type="function">
    <text evidence="1">Part of the outer membrane protein assembly complex, which is involved in assembly and insertion of beta-barrel proteins into the outer membrane. Constitutes, with BamD, the core component of the assembly machinery.</text>
</comment>
<comment type="subunit">
    <text evidence="1">Part of the Bam complex, which is composed of the outer membrane protein BamA, and four lipoproteins BamB, BamC, BamD and BamE.</text>
</comment>
<comment type="subcellular location">
    <subcellularLocation>
        <location evidence="1">Cell outer membrane</location>
    </subcellularLocation>
</comment>
<comment type="similarity">
    <text evidence="1">Belongs to the BamA family.</text>
</comment>
<gene>
    <name evidence="1" type="primary">bamA</name>
    <name type="synonym">yaeT</name>
    <name type="ordered locus">EC55989_0171</name>
</gene>
<evidence type="ECO:0000255" key="1">
    <source>
        <dbReference type="HAMAP-Rule" id="MF_01430"/>
    </source>
</evidence>
<evidence type="ECO:0000255" key="2">
    <source>
        <dbReference type="PROSITE-ProRule" id="PRU01115"/>
    </source>
</evidence>
<dbReference type="EMBL" id="CU928145">
    <property type="protein sequence ID" value="CAU96057.1"/>
    <property type="molecule type" value="Genomic_DNA"/>
</dbReference>
<dbReference type="RefSeq" id="WP_001240896.1">
    <property type="nucleotide sequence ID" value="NZ_CP028304.1"/>
</dbReference>
<dbReference type="SMR" id="B7LGN8"/>
<dbReference type="GeneID" id="93777248"/>
<dbReference type="KEGG" id="eck:EC55989_0171"/>
<dbReference type="HOGENOM" id="CLU_007664_1_0_6"/>
<dbReference type="Proteomes" id="UP000000746">
    <property type="component" value="Chromosome"/>
</dbReference>
<dbReference type="GO" id="GO:1990063">
    <property type="term" value="C:Bam protein complex"/>
    <property type="evidence" value="ECO:0007669"/>
    <property type="project" value="TreeGrafter"/>
</dbReference>
<dbReference type="GO" id="GO:0043165">
    <property type="term" value="P:Gram-negative-bacterium-type cell outer membrane assembly"/>
    <property type="evidence" value="ECO:0007669"/>
    <property type="project" value="UniProtKB-UniRule"/>
</dbReference>
<dbReference type="GO" id="GO:0051205">
    <property type="term" value="P:protein insertion into membrane"/>
    <property type="evidence" value="ECO:0007669"/>
    <property type="project" value="UniProtKB-UniRule"/>
</dbReference>
<dbReference type="FunFam" id="2.40.160.50:FF:000001">
    <property type="entry name" value="Outer membrane protein assembly factor BamA"/>
    <property type="match status" value="1"/>
</dbReference>
<dbReference type="FunFam" id="3.10.20.310:FF:000001">
    <property type="entry name" value="Outer membrane protein assembly factor BamA"/>
    <property type="match status" value="1"/>
</dbReference>
<dbReference type="FunFam" id="3.10.20.310:FF:000002">
    <property type="entry name" value="Outer membrane protein assembly factor BamA"/>
    <property type="match status" value="1"/>
</dbReference>
<dbReference type="FunFam" id="3.10.20.310:FF:000003">
    <property type="entry name" value="Outer membrane protein assembly factor BamA"/>
    <property type="match status" value="1"/>
</dbReference>
<dbReference type="FunFam" id="3.10.20.310:FF:000004">
    <property type="entry name" value="Outer membrane protein assembly factor BamA"/>
    <property type="match status" value="1"/>
</dbReference>
<dbReference type="FunFam" id="3.10.20.310:FF:000005">
    <property type="entry name" value="Outer membrane protein assembly factor BamA"/>
    <property type="match status" value="1"/>
</dbReference>
<dbReference type="Gene3D" id="3.10.20.310">
    <property type="entry name" value="membrane protein fhac"/>
    <property type="match status" value="5"/>
</dbReference>
<dbReference type="Gene3D" id="2.40.160.50">
    <property type="entry name" value="membrane protein fhac: a member of the omp85/tpsb transporter family"/>
    <property type="match status" value="1"/>
</dbReference>
<dbReference type="HAMAP" id="MF_01430">
    <property type="entry name" value="OM_assembly_BamA"/>
    <property type="match status" value="1"/>
</dbReference>
<dbReference type="InterPro" id="IPR000184">
    <property type="entry name" value="Bac_surfAg_D15"/>
</dbReference>
<dbReference type="InterPro" id="IPR010827">
    <property type="entry name" value="BamA/TamA_POTRA"/>
</dbReference>
<dbReference type="InterPro" id="IPR039910">
    <property type="entry name" value="D15-like"/>
</dbReference>
<dbReference type="InterPro" id="IPR023707">
    <property type="entry name" value="OM_assembly_BamA"/>
</dbReference>
<dbReference type="InterPro" id="IPR034746">
    <property type="entry name" value="POTRA"/>
</dbReference>
<dbReference type="NCBIfam" id="TIGR03303">
    <property type="entry name" value="OM_YaeT"/>
    <property type="match status" value="1"/>
</dbReference>
<dbReference type="NCBIfam" id="NF008287">
    <property type="entry name" value="PRK11067.1"/>
    <property type="match status" value="1"/>
</dbReference>
<dbReference type="PANTHER" id="PTHR12815:SF23">
    <property type="entry name" value="OUTER MEMBRANE PROTEIN ASSEMBLY FACTOR BAMA"/>
    <property type="match status" value="1"/>
</dbReference>
<dbReference type="PANTHER" id="PTHR12815">
    <property type="entry name" value="SORTING AND ASSEMBLY MACHINERY SAMM50 PROTEIN FAMILY MEMBER"/>
    <property type="match status" value="1"/>
</dbReference>
<dbReference type="Pfam" id="PF01103">
    <property type="entry name" value="Omp85"/>
    <property type="match status" value="1"/>
</dbReference>
<dbReference type="Pfam" id="PF07244">
    <property type="entry name" value="POTRA"/>
    <property type="match status" value="4"/>
</dbReference>
<dbReference type="PIRSF" id="PIRSF006076">
    <property type="entry name" value="OM_assembly_OMP85"/>
    <property type="match status" value="1"/>
</dbReference>
<dbReference type="PROSITE" id="PS51779">
    <property type="entry name" value="POTRA"/>
    <property type="match status" value="5"/>
</dbReference>
<feature type="signal peptide" evidence="1">
    <location>
        <begin position="1"/>
        <end position="20"/>
    </location>
</feature>
<feature type="chain" id="PRO_1000184889" description="Outer membrane protein assembly factor BamA">
    <location>
        <begin position="21"/>
        <end position="810"/>
    </location>
</feature>
<feature type="domain" description="POTRA 1" evidence="2">
    <location>
        <begin position="24"/>
        <end position="91"/>
    </location>
</feature>
<feature type="domain" description="POTRA 2" evidence="2">
    <location>
        <begin position="92"/>
        <end position="172"/>
    </location>
</feature>
<feature type="domain" description="POTRA 3" evidence="2">
    <location>
        <begin position="175"/>
        <end position="263"/>
    </location>
</feature>
<feature type="domain" description="POTRA 4" evidence="2">
    <location>
        <begin position="266"/>
        <end position="344"/>
    </location>
</feature>
<feature type="domain" description="POTRA 5" evidence="2">
    <location>
        <begin position="347"/>
        <end position="421"/>
    </location>
</feature>